<accession>Q8Z327</accession>
<accession>Q7C6P6</accession>
<sequence>MLNQLENLMERVGGSNKLVDRWLDVRKHLLVAYYNLVGIKPGKESYMRLNEKALDDFCQSLVDYLSAGHFSIYERILHKLEGNGQLLHAAKIWPLLEDNTQRIMDYYDTSLETAIDHDNCLEFQQALSDIGEALEARFVLEDKLIMLVFDAMHDGARVKRPA</sequence>
<name>RSD_SALTI</name>
<dbReference type="EMBL" id="AL513382">
    <property type="protein sequence ID" value="CAD09479.1"/>
    <property type="molecule type" value="Genomic_DNA"/>
</dbReference>
<dbReference type="EMBL" id="AE014613">
    <property type="protein sequence ID" value="AAO70982.1"/>
    <property type="molecule type" value="Genomic_DNA"/>
</dbReference>
<dbReference type="RefSeq" id="NP_457909.1">
    <property type="nucleotide sequence ID" value="NC_003198.1"/>
</dbReference>
<dbReference type="RefSeq" id="WP_000934311.1">
    <property type="nucleotide sequence ID" value="NZ_WSUR01000043.1"/>
</dbReference>
<dbReference type="SMR" id="Q8Z327"/>
<dbReference type="STRING" id="220341.gene:17587580"/>
<dbReference type="KEGG" id="stt:t3466"/>
<dbReference type="KEGG" id="sty:STY3720"/>
<dbReference type="PATRIC" id="fig|220341.7.peg.3792"/>
<dbReference type="eggNOG" id="COG3160">
    <property type="taxonomic scope" value="Bacteria"/>
</dbReference>
<dbReference type="HOGENOM" id="CLU_142729_0_0_6"/>
<dbReference type="OMA" id="DVIDHWL"/>
<dbReference type="OrthoDB" id="5567237at2"/>
<dbReference type="Proteomes" id="UP000000541">
    <property type="component" value="Chromosome"/>
</dbReference>
<dbReference type="Proteomes" id="UP000002670">
    <property type="component" value="Chromosome"/>
</dbReference>
<dbReference type="GO" id="GO:0005737">
    <property type="term" value="C:cytoplasm"/>
    <property type="evidence" value="ECO:0007669"/>
    <property type="project" value="UniProtKB-SubCell"/>
</dbReference>
<dbReference type="GO" id="GO:0006355">
    <property type="term" value="P:regulation of DNA-templated transcription"/>
    <property type="evidence" value="ECO:0007669"/>
    <property type="project" value="InterPro"/>
</dbReference>
<dbReference type="FunFam" id="1.20.120.1370:FF:000001">
    <property type="entry name" value="Regulator of sigma D"/>
    <property type="match status" value="1"/>
</dbReference>
<dbReference type="Gene3D" id="1.20.120.1370">
    <property type="entry name" value="Regulator of RNA polymerase sigma(70) subunit, domain 4"/>
    <property type="match status" value="1"/>
</dbReference>
<dbReference type="HAMAP" id="MF_01181">
    <property type="entry name" value="Rsd"/>
    <property type="match status" value="1"/>
</dbReference>
<dbReference type="InterPro" id="IPR038309">
    <property type="entry name" value="Rsd/AlgQ_sf"/>
</dbReference>
<dbReference type="InterPro" id="IPR023785">
    <property type="entry name" value="Sigma70_reg_Rsd"/>
</dbReference>
<dbReference type="InterPro" id="IPR007448">
    <property type="entry name" value="Sigma70_reg_Rsd_AlgQ"/>
</dbReference>
<dbReference type="NCBIfam" id="NF008723">
    <property type="entry name" value="PRK11718.1"/>
    <property type="match status" value="1"/>
</dbReference>
<dbReference type="Pfam" id="PF04353">
    <property type="entry name" value="Rsd_AlgQ"/>
    <property type="match status" value="1"/>
</dbReference>
<dbReference type="PIRSF" id="PIRSF016548">
    <property type="entry name" value="Rsd_AlgQ"/>
    <property type="match status" value="1"/>
</dbReference>
<keyword id="KW-0963">Cytoplasm</keyword>
<keyword id="KW-0804">Transcription</keyword>
<keyword id="KW-0805">Transcription regulation</keyword>
<reference key="1">
    <citation type="journal article" date="2001" name="Nature">
        <title>Complete genome sequence of a multiple drug resistant Salmonella enterica serovar Typhi CT18.</title>
        <authorList>
            <person name="Parkhill J."/>
            <person name="Dougan G."/>
            <person name="James K.D."/>
            <person name="Thomson N.R."/>
            <person name="Pickard D."/>
            <person name="Wain J."/>
            <person name="Churcher C.M."/>
            <person name="Mungall K.L."/>
            <person name="Bentley S.D."/>
            <person name="Holden M.T.G."/>
            <person name="Sebaihia M."/>
            <person name="Baker S."/>
            <person name="Basham D."/>
            <person name="Brooks K."/>
            <person name="Chillingworth T."/>
            <person name="Connerton P."/>
            <person name="Cronin A."/>
            <person name="Davis P."/>
            <person name="Davies R.M."/>
            <person name="Dowd L."/>
            <person name="White N."/>
            <person name="Farrar J."/>
            <person name="Feltwell T."/>
            <person name="Hamlin N."/>
            <person name="Haque A."/>
            <person name="Hien T.T."/>
            <person name="Holroyd S."/>
            <person name="Jagels K."/>
            <person name="Krogh A."/>
            <person name="Larsen T.S."/>
            <person name="Leather S."/>
            <person name="Moule S."/>
            <person name="O'Gaora P."/>
            <person name="Parry C."/>
            <person name="Quail M.A."/>
            <person name="Rutherford K.M."/>
            <person name="Simmonds M."/>
            <person name="Skelton J."/>
            <person name="Stevens K."/>
            <person name="Whitehead S."/>
            <person name="Barrell B.G."/>
        </authorList>
    </citation>
    <scope>NUCLEOTIDE SEQUENCE [LARGE SCALE GENOMIC DNA]</scope>
    <source>
        <strain>CT18</strain>
    </source>
</reference>
<reference key="2">
    <citation type="journal article" date="2003" name="J. Bacteriol.">
        <title>Comparative genomics of Salmonella enterica serovar Typhi strains Ty2 and CT18.</title>
        <authorList>
            <person name="Deng W."/>
            <person name="Liou S.-R."/>
            <person name="Plunkett G. III"/>
            <person name="Mayhew G.F."/>
            <person name="Rose D.J."/>
            <person name="Burland V."/>
            <person name="Kodoyianni V."/>
            <person name="Schwartz D.C."/>
            <person name="Blattner F.R."/>
        </authorList>
    </citation>
    <scope>NUCLEOTIDE SEQUENCE [LARGE SCALE GENOMIC DNA]</scope>
    <source>
        <strain>ATCC 700931 / Ty2</strain>
    </source>
</reference>
<protein>
    <recommendedName>
        <fullName evidence="1">Regulator of sigma D</fullName>
    </recommendedName>
</protein>
<organism>
    <name type="scientific">Salmonella typhi</name>
    <dbReference type="NCBI Taxonomy" id="90370"/>
    <lineage>
        <taxon>Bacteria</taxon>
        <taxon>Pseudomonadati</taxon>
        <taxon>Pseudomonadota</taxon>
        <taxon>Gammaproteobacteria</taxon>
        <taxon>Enterobacterales</taxon>
        <taxon>Enterobacteriaceae</taxon>
        <taxon>Salmonella</taxon>
    </lineage>
</organism>
<evidence type="ECO:0000255" key="1">
    <source>
        <dbReference type="HAMAP-Rule" id="MF_01181"/>
    </source>
</evidence>
<proteinExistence type="inferred from homology"/>
<comment type="function">
    <text evidence="1">Binds RpoD and negatively regulates RpoD-mediated transcription activation by preventing the interaction between the primary sigma factor RpoD with the catalytic core of the RNA polymerase and with promoter DNA. May be involved in replacement of the RNA polymerase sigma subunit from RpoD to RpoS during the transition from exponential growth to the stationary phase.</text>
</comment>
<comment type="subunit">
    <text evidence="1">Interacts with RpoD.</text>
</comment>
<comment type="subcellular location">
    <subcellularLocation>
        <location evidence="1">Cytoplasm</location>
    </subcellularLocation>
</comment>
<comment type="similarity">
    <text evidence="1">Belongs to the Rsd/AlgQ family.</text>
</comment>
<feature type="chain" id="PRO_0000268886" description="Regulator of sigma D">
    <location>
        <begin position="1"/>
        <end position="162"/>
    </location>
</feature>
<gene>
    <name evidence="1" type="primary">rsd</name>
    <name type="ordered locus">STY3720</name>
    <name type="ordered locus">t3466</name>
</gene>